<organism>
    <name type="scientific">Gallus gallus</name>
    <name type="common">Chicken</name>
    <dbReference type="NCBI Taxonomy" id="9031"/>
    <lineage>
        <taxon>Eukaryota</taxon>
        <taxon>Metazoa</taxon>
        <taxon>Chordata</taxon>
        <taxon>Craniata</taxon>
        <taxon>Vertebrata</taxon>
        <taxon>Euteleostomi</taxon>
        <taxon>Archelosauria</taxon>
        <taxon>Archosauria</taxon>
        <taxon>Dinosauria</taxon>
        <taxon>Saurischia</taxon>
        <taxon>Theropoda</taxon>
        <taxon>Coelurosauria</taxon>
        <taxon>Aves</taxon>
        <taxon>Neognathae</taxon>
        <taxon>Galloanserae</taxon>
        <taxon>Galliformes</taxon>
        <taxon>Phasianidae</taxon>
        <taxon>Phasianinae</taxon>
        <taxon>Gallus</taxon>
    </lineage>
</organism>
<evidence type="ECO:0000250" key="1"/>
<evidence type="ECO:0000256" key="2">
    <source>
        <dbReference type="SAM" id="MobiDB-lite"/>
    </source>
</evidence>
<evidence type="ECO:0000305" key="3"/>
<accession>P23614</accession>
<accession>Q8JHB7</accession>
<name>BASP1_CHICK</name>
<sequence>MGGKLSKKKKGYSVNDEKAKDKDKKAEGAATEEEETPKEAEDAQQTTETTEVKENNKEEKVEKDAQVSANKTEEKEGEKEKTVTQEEAQKAEPEKSEAVVDAKVEPQKNNEQAPKQEEPAAASAPAASSEAPKTSEPSSDAKASQPSEATAPSKADDKSKEEGEAKKTEAPATPAAQETKSEVAPASDSKPSSSEAAPSSKETVAATAAPSSTAKASDPSAPPEEAKPSEAPATNSDQTIAVQD</sequence>
<comment type="function">
    <text>May play a specific role in the development of tissues.</text>
</comment>
<comment type="subcellular location">
    <subcellularLocation>
        <location>Cytoplasm</location>
        <location>Cytoskeleton</location>
    </subcellularLocation>
    <text>Cortical cytoskeleton.</text>
</comment>
<comment type="tissue specificity">
    <text>Developing tissues.</text>
</comment>
<comment type="similarity">
    <text evidence="3">Belongs to the BASP1 family.</text>
</comment>
<comment type="sequence caution" evidence="3">
    <conflict type="frameshift">
        <sequence resource="EMBL-CDS" id="CAA38647"/>
    </conflict>
</comment>
<dbReference type="EMBL" id="X54861">
    <property type="protein sequence ID" value="CAA38647.1"/>
    <property type="status" value="ALT_FRAME"/>
    <property type="molecule type" value="Genomic_DNA"/>
</dbReference>
<dbReference type="EMBL" id="AF521668">
    <property type="protein sequence ID" value="AAM77680.1"/>
    <property type="molecule type" value="mRNA"/>
</dbReference>
<dbReference type="PIR" id="A36344">
    <property type="entry name" value="A36344"/>
</dbReference>
<dbReference type="RefSeq" id="NP_989447.1">
    <property type="nucleotide sequence ID" value="NM_204116.4"/>
</dbReference>
<dbReference type="RefSeq" id="XP_025002757.1">
    <property type="nucleotide sequence ID" value="XM_025146989.3"/>
</dbReference>
<dbReference type="RefSeq" id="XP_040530016.1">
    <property type="nucleotide sequence ID" value="XM_040674082.2"/>
</dbReference>
<dbReference type="RefSeq" id="XP_046766099.1">
    <property type="nucleotide sequence ID" value="XM_046910143.1"/>
</dbReference>
<dbReference type="RefSeq" id="XP_046766100.1">
    <property type="nucleotide sequence ID" value="XM_046910144.1"/>
</dbReference>
<dbReference type="RefSeq" id="XP_046766101.1">
    <property type="nucleotide sequence ID" value="XM_046910145.1"/>
</dbReference>
<dbReference type="RefSeq" id="XP_046766102.1">
    <property type="nucleotide sequence ID" value="XM_046910146.1"/>
</dbReference>
<dbReference type="RefSeq" id="XP_046766103.1">
    <property type="nucleotide sequence ID" value="XM_046910147.1"/>
</dbReference>
<dbReference type="RefSeq" id="XP_046766104.1">
    <property type="nucleotide sequence ID" value="XM_046910148.1"/>
</dbReference>
<dbReference type="RefSeq" id="XP_046772977.1">
    <property type="nucleotide sequence ID" value="XM_046917021.1"/>
</dbReference>
<dbReference type="RefSeq" id="XP_046772980.1">
    <property type="nucleotide sequence ID" value="XM_046917024.1"/>
</dbReference>
<dbReference type="RefSeq" id="XP_046772986.1">
    <property type="nucleotide sequence ID" value="XM_046917030.1"/>
</dbReference>
<dbReference type="RefSeq" id="XP_046772987.1">
    <property type="nucleotide sequence ID" value="XM_046917031.1"/>
</dbReference>
<dbReference type="BMRB" id="P23614"/>
<dbReference type="STRING" id="9031.ENSGALP00000074277"/>
<dbReference type="GlyGen" id="P23614">
    <property type="glycosylation" value="1 site"/>
</dbReference>
<dbReference type="iPTMnet" id="P23614"/>
<dbReference type="PaxDb" id="9031-ENSGALP00000036341"/>
<dbReference type="Ensembl" id="ENSGALT00010001817.1">
    <property type="protein sequence ID" value="ENSGALP00010001018.1"/>
    <property type="gene ID" value="ENSGALG00010000822.1"/>
</dbReference>
<dbReference type="Ensembl" id="ENSGALT00010001818.1">
    <property type="protein sequence ID" value="ENSGALP00010001019.1"/>
    <property type="gene ID" value="ENSGALG00010000822.1"/>
</dbReference>
<dbReference type="Ensembl" id="ENSGALT00010001819.1">
    <property type="protein sequence ID" value="ENSGALP00010001020.1"/>
    <property type="gene ID" value="ENSGALG00010000822.1"/>
</dbReference>
<dbReference type="Ensembl" id="ENSGALT00010001820.1">
    <property type="protein sequence ID" value="ENSGALP00010001021.1"/>
    <property type="gene ID" value="ENSGALG00010000822.1"/>
</dbReference>
<dbReference type="Ensembl" id="ENSGALT00010001821.1">
    <property type="protein sequence ID" value="ENSGALP00010001022.1"/>
    <property type="gene ID" value="ENSGALG00010000822.1"/>
</dbReference>
<dbReference type="Ensembl" id="ENSGALT00010001823.1">
    <property type="protein sequence ID" value="ENSGALP00010001024.1"/>
    <property type="gene ID" value="ENSGALG00010000822.1"/>
</dbReference>
<dbReference type="Ensembl" id="ENSGALT00010001824.1">
    <property type="protein sequence ID" value="ENSGALP00010001025.1"/>
    <property type="gene ID" value="ENSGALG00010000822.1"/>
</dbReference>
<dbReference type="Ensembl" id="ENSGALT00010001826.1">
    <property type="protein sequence ID" value="ENSGALP00010001027.1"/>
    <property type="gene ID" value="ENSGALG00010000822.1"/>
</dbReference>
<dbReference type="Ensembl" id="ENSGALT00010001827.1">
    <property type="protein sequence ID" value="ENSGALP00010001028.1"/>
    <property type="gene ID" value="ENSGALG00010000822.1"/>
</dbReference>
<dbReference type="Ensembl" id="ENSGALT00010001828.1">
    <property type="protein sequence ID" value="ENSGALP00010001029.1"/>
    <property type="gene ID" value="ENSGALG00010000822.1"/>
</dbReference>
<dbReference type="GeneID" id="373905"/>
<dbReference type="KEGG" id="gga:373905"/>
<dbReference type="CTD" id="10409"/>
<dbReference type="VEuPathDB" id="HostDB:geneid_373905"/>
<dbReference type="eggNOG" id="ENOG502RXJZ">
    <property type="taxonomic scope" value="Eukaryota"/>
</dbReference>
<dbReference type="GeneTree" id="ENSGT00730000111450"/>
<dbReference type="HOGENOM" id="CLU_093511_0_0_1"/>
<dbReference type="InParanoid" id="P23614"/>
<dbReference type="OMA" id="EEFDHAE"/>
<dbReference type="PhylomeDB" id="P23614"/>
<dbReference type="Reactome" id="R-GGA-9035034">
    <property type="pathway name" value="RHOF GTPase cycle"/>
</dbReference>
<dbReference type="PRO" id="PR:P23614"/>
<dbReference type="Proteomes" id="UP000000539">
    <property type="component" value="Chromosome 2"/>
</dbReference>
<dbReference type="Bgee" id="ENSGALG00000012952">
    <property type="expression patterns" value="Expressed in brain and 14 other cell types or tissues"/>
</dbReference>
<dbReference type="GO" id="GO:0030054">
    <property type="term" value="C:cell junction"/>
    <property type="evidence" value="ECO:0007669"/>
    <property type="project" value="Ensembl"/>
</dbReference>
<dbReference type="GO" id="GO:0000785">
    <property type="term" value="C:chromatin"/>
    <property type="evidence" value="ECO:0007669"/>
    <property type="project" value="Ensembl"/>
</dbReference>
<dbReference type="GO" id="GO:0008180">
    <property type="term" value="C:COP9 signalosome"/>
    <property type="evidence" value="ECO:0007669"/>
    <property type="project" value="Ensembl"/>
</dbReference>
<dbReference type="GO" id="GO:0030863">
    <property type="term" value="C:cortical cytoskeleton"/>
    <property type="evidence" value="ECO:0000314"/>
    <property type="project" value="AgBase"/>
</dbReference>
<dbReference type="GO" id="GO:0005737">
    <property type="term" value="C:cytoplasm"/>
    <property type="evidence" value="ECO:0000314"/>
    <property type="project" value="AgBase"/>
</dbReference>
<dbReference type="GO" id="GO:0030426">
    <property type="term" value="C:growth cone"/>
    <property type="evidence" value="ECO:0000314"/>
    <property type="project" value="AgBase"/>
</dbReference>
<dbReference type="GO" id="GO:0016363">
    <property type="term" value="C:nuclear matrix"/>
    <property type="evidence" value="ECO:0007669"/>
    <property type="project" value="Ensembl"/>
</dbReference>
<dbReference type="GO" id="GO:0016607">
    <property type="term" value="C:nuclear speck"/>
    <property type="evidence" value="ECO:0007669"/>
    <property type="project" value="Ensembl"/>
</dbReference>
<dbReference type="GO" id="GO:0005634">
    <property type="term" value="C:nucleus"/>
    <property type="evidence" value="ECO:0000314"/>
    <property type="project" value="AgBase"/>
</dbReference>
<dbReference type="GO" id="GO:0005886">
    <property type="term" value="C:plasma membrane"/>
    <property type="evidence" value="ECO:0007669"/>
    <property type="project" value="Ensembl"/>
</dbReference>
<dbReference type="GO" id="GO:0016605">
    <property type="term" value="C:PML body"/>
    <property type="evidence" value="ECO:0007669"/>
    <property type="project" value="Ensembl"/>
</dbReference>
<dbReference type="GO" id="GO:0005516">
    <property type="term" value="F:calmodulin binding"/>
    <property type="evidence" value="ECO:0007669"/>
    <property type="project" value="Ensembl"/>
</dbReference>
<dbReference type="GO" id="GO:0019904">
    <property type="term" value="F:protein domain specific binding"/>
    <property type="evidence" value="ECO:0007669"/>
    <property type="project" value="Ensembl"/>
</dbReference>
<dbReference type="GO" id="GO:0000976">
    <property type="term" value="F:transcription cis-regulatory region binding"/>
    <property type="evidence" value="ECO:0000318"/>
    <property type="project" value="GO_Central"/>
</dbReference>
<dbReference type="GO" id="GO:0003714">
    <property type="term" value="F:transcription corepressor activity"/>
    <property type="evidence" value="ECO:0000318"/>
    <property type="project" value="GO_Central"/>
</dbReference>
<dbReference type="GO" id="GO:0045892">
    <property type="term" value="P:negative regulation of DNA-templated transcription"/>
    <property type="evidence" value="ECO:0000314"/>
    <property type="project" value="AgBase"/>
</dbReference>
<dbReference type="GO" id="GO:0072112">
    <property type="term" value="P:podocyte differentiation"/>
    <property type="evidence" value="ECO:0007669"/>
    <property type="project" value="Ensembl"/>
</dbReference>
<dbReference type="GO" id="GO:0051260">
    <property type="term" value="P:protein homooligomerization"/>
    <property type="evidence" value="ECO:0007669"/>
    <property type="project" value="Ensembl"/>
</dbReference>
<dbReference type="GO" id="GO:0097435">
    <property type="term" value="P:supramolecular fiber organization"/>
    <property type="evidence" value="ECO:0007669"/>
    <property type="project" value="Ensembl"/>
</dbReference>
<dbReference type="InterPro" id="IPR008408">
    <property type="entry name" value="BASP1"/>
</dbReference>
<dbReference type="PANTHER" id="PTHR23212">
    <property type="entry name" value="BRAIN ACID SOLUBLE PROTEIN 1"/>
    <property type="match status" value="1"/>
</dbReference>
<dbReference type="PANTHER" id="PTHR23212:SF0">
    <property type="entry name" value="BRAIN ACID SOLUBLE PROTEIN 1"/>
    <property type="match status" value="1"/>
</dbReference>
<dbReference type="Pfam" id="PF05466">
    <property type="entry name" value="BASP1"/>
    <property type="match status" value="1"/>
</dbReference>
<protein>
    <recommendedName>
        <fullName>Brain acid soluble protein 1 homolog</fullName>
    </recommendedName>
    <alternativeName>
        <fullName>23 kDa cortical cytoskeleton-associated protein</fullName>
        <shortName>CAP-23</shortName>
    </alternativeName>
</protein>
<reference key="1">
    <citation type="journal article" date="1990" name="J. Cell Biol.">
        <title>Identification, localization, and primary structure of CAP-23, a particle-bound cytosolic protein of early development.</title>
        <authorList>
            <person name="Widmer F."/>
            <person name="Caroni P."/>
        </authorList>
    </citation>
    <scope>NUCLEOTIDE SEQUENCE [GENOMIC DNA]</scope>
</reference>
<reference key="2">
    <citation type="submission" date="2002-06" db="EMBL/GenBank/DDBJ databases">
        <authorList>
            <person name="Wacha S."/>
            <person name="Widmer F."/>
            <person name="Caroni P."/>
        </authorList>
    </citation>
    <scope>NUCLEOTIDE SEQUENCE [MRNA]</scope>
</reference>
<proteinExistence type="evidence at transcript level"/>
<feature type="initiator methionine" description="Removed" evidence="1">
    <location>
        <position position="1"/>
    </location>
</feature>
<feature type="chain" id="PRO_0000142898" description="Brain acid soluble protein 1 homolog">
    <location>
        <begin position="2"/>
        <end position="244"/>
    </location>
</feature>
<feature type="region of interest" description="Disordered" evidence="2">
    <location>
        <begin position="1"/>
        <end position="244"/>
    </location>
</feature>
<feature type="compositionally biased region" description="Basic residues" evidence="2">
    <location>
        <begin position="1"/>
        <end position="11"/>
    </location>
</feature>
<feature type="compositionally biased region" description="Basic and acidic residues" evidence="2">
    <location>
        <begin position="15"/>
        <end position="27"/>
    </location>
</feature>
<feature type="compositionally biased region" description="Basic and acidic residues" evidence="2">
    <location>
        <begin position="50"/>
        <end position="118"/>
    </location>
</feature>
<feature type="compositionally biased region" description="Low complexity" evidence="2">
    <location>
        <begin position="119"/>
        <end position="138"/>
    </location>
</feature>
<feature type="compositionally biased region" description="Polar residues" evidence="2">
    <location>
        <begin position="141"/>
        <end position="150"/>
    </location>
</feature>
<feature type="compositionally biased region" description="Basic and acidic residues" evidence="2">
    <location>
        <begin position="154"/>
        <end position="169"/>
    </location>
</feature>
<feature type="compositionally biased region" description="Low complexity" evidence="2">
    <location>
        <begin position="170"/>
        <end position="219"/>
    </location>
</feature>
<feature type="compositionally biased region" description="Polar residues" evidence="2">
    <location>
        <begin position="234"/>
        <end position="244"/>
    </location>
</feature>
<feature type="modified residue" description="Phosphoserine; by PKC" evidence="3">
    <location>
        <position position="6"/>
    </location>
</feature>
<feature type="lipid moiety-binding region" description="N-myristoyl glycine" evidence="1">
    <location>
        <position position="2"/>
    </location>
</feature>
<feature type="sequence conflict" description="In Ref. 1; CAA38647." evidence="3" ref="1">
    <original>A</original>
    <variation>R</variation>
    <location>
        <position position="124"/>
    </location>
</feature>
<feature type="sequence conflict" description="In Ref. 1; CAA38647." evidence="3" ref="1">
    <original>A</original>
    <variation>R</variation>
    <location>
        <position position="131"/>
    </location>
</feature>
<gene>
    <name type="primary">BASP1</name>
</gene>
<keyword id="KW-0963">Cytoplasm</keyword>
<keyword id="KW-0206">Cytoskeleton</keyword>
<keyword id="KW-0217">Developmental protein</keyword>
<keyword id="KW-0449">Lipoprotein</keyword>
<keyword id="KW-0519">Myristate</keyword>
<keyword id="KW-0597">Phosphoprotein</keyword>
<keyword id="KW-1185">Reference proteome</keyword>